<sequence>MAAGCEGIAPPTLGERTVGEEGEPVKPFTPEKAKEIIMSLQQPAIFCNMVFDWPSRHWTAKHLSKVLEGKQIRFRMGLRGTGTVPQYETECSYVDATLEEFLTWNCDQSSISGPFKDYEHSKFWAYADYKYFVTLFEDKTDVFQEVVWSDFGFPGRNGQESTLWIGSFGAHTPCHLDSYGCNLVFQVQGRKRWHLFPPEDTPFLYPTRIPYEESSVFSKINVVNPDLKCFPQFQKARRHMVTLSPGQVLFVPRHWWHYVESLDPVTVSINSWIELEEDHLARVEEAITRMLVCTLKTAEDPHHPRTWLNPTEVEETSHEVNSCYLNSAVCAFFDHCEKAKAVELQVLSANGAEPRVQEEHMEVEQAQGPSLTSRAEKQEAVSLFGPDLIPVTPASEERGGALEGDSEESVSSNGGHFAELPCARRQQTSKGASALTEPLAPRGPMAHSRVFVSTDDLLDCLVNPQVTRMVAQLLIQGKSCDTF</sequence>
<name>HBAP1_MOUSE</name>
<organism>
    <name type="scientific">Mus musculus</name>
    <name type="common">Mouse</name>
    <dbReference type="NCBI Taxonomy" id="10090"/>
    <lineage>
        <taxon>Eukaryota</taxon>
        <taxon>Metazoa</taxon>
        <taxon>Chordata</taxon>
        <taxon>Craniata</taxon>
        <taxon>Vertebrata</taxon>
        <taxon>Euteleostomi</taxon>
        <taxon>Mammalia</taxon>
        <taxon>Eutheria</taxon>
        <taxon>Euarchontoglires</taxon>
        <taxon>Glires</taxon>
        <taxon>Rodentia</taxon>
        <taxon>Myomorpha</taxon>
        <taxon>Muroidea</taxon>
        <taxon>Muridae</taxon>
        <taxon>Murinae</taxon>
        <taxon>Mus</taxon>
        <taxon>Mus</taxon>
    </lineage>
</organism>
<keyword id="KW-0963">Cytoplasm</keyword>
<keyword id="KW-1185">Reference proteome</keyword>
<accession>Q8BK58</accession>
<accession>E9QML8</accession>
<evidence type="ECO:0000250" key="1"/>
<evidence type="ECO:0000255" key="2">
    <source>
        <dbReference type="PROSITE-ProRule" id="PRU00538"/>
    </source>
</evidence>
<evidence type="ECO:0000256" key="3">
    <source>
        <dbReference type="SAM" id="MobiDB-lite"/>
    </source>
</evidence>
<evidence type="ECO:0000269" key="4">
    <source>
    </source>
</evidence>
<evidence type="ECO:0000305" key="5"/>
<proteinExistence type="evidence at protein level"/>
<gene>
    <name type="primary">Hspbap1</name>
    <name type="synonym">Pass1</name>
</gene>
<protein>
    <recommendedName>
        <fullName>HSPB1-associated protein 1</fullName>
    </recommendedName>
    <alternativeName>
        <fullName>27 kDa heat shock protein-associated protein 1</fullName>
    </alternativeName>
    <alternativeName>
        <fullName>Protein associated with small stress protein 1</fullName>
    </alternativeName>
</protein>
<reference key="1">
    <citation type="journal article" date="2005" name="Science">
        <title>The transcriptional landscape of the mammalian genome.</title>
        <authorList>
            <person name="Carninci P."/>
            <person name="Kasukawa T."/>
            <person name="Katayama S."/>
            <person name="Gough J."/>
            <person name="Frith M.C."/>
            <person name="Maeda N."/>
            <person name="Oyama R."/>
            <person name="Ravasi T."/>
            <person name="Lenhard B."/>
            <person name="Wells C."/>
            <person name="Kodzius R."/>
            <person name="Shimokawa K."/>
            <person name="Bajic V.B."/>
            <person name="Brenner S.E."/>
            <person name="Batalov S."/>
            <person name="Forrest A.R."/>
            <person name="Zavolan M."/>
            <person name="Davis M.J."/>
            <person name="Wilming L.G."/>
            <person name="Aidinis V."/>
            <person name="Allen J.E."/>
            <person name="Ambesi-Impiombato A."/>
            <person name="Apweiler R."/>
            <person name="Aturaliya R.N."/>
            <person name="Bailey T.L."/>
            <person name="Bansal M."/>
            <person name="Baxter L."/>
            <person name="Beisel K.W."/>
            <person name="Bersano T."/>
            <person name="Bono H."/>
            <person name="Chalk A.M."/>
            <person name="Chiu K.P."/>
            <person name="Choudhary V."/>
            <person name="Christoffels A."/>
            <person name="Clutterbuck D.R."/>
            <person name="Crowe M.L."/>
            <person name="Dalla E."/>
            <person name="Dalrymple B.P."/>
            <person name="de Bono B."/>
            <person name="Della Gatta G."/>
            <person name="di Bernardo D."/>
            <person name="Down T."/>
            <person name="Engstrom P."/>
            <person name="Fagiolini M."/>
            <person name="Faulkner G."/>
            <person name="Fletcher C.F."/>
            <person name="Fukushima T."/>
            <person name="Furuno M."/>
            <person name="Futaki S."/>
            <person name="Gariboldi M."/>
            <person name="Georgii-Hemming P."/>
            <person name="Gingeras T.R."/>
            <person name="Gojobori T."/>
            <person name="Green R.E."/>
            <person name="Gustincich S."/>
            <person name="Harbers M."/>
            <person name="Hayashi Y."/>
            <person name="Hensch T.K."/>
            <person name="Hirokawa N."/>
            <person name="Hill D."/>
            <person name="Huminiecki L."/>
            <person name="Iacono M."/>
            <person name="Ikeo K."/>
            <person name="Iwama A."/>
            <person name="Ishikawa T."/>
            <person name="Jakt M."/>
            <person name="Kanapin A."/>
            <person name="Katoh M."/>
            <person name="Kawasawa Y."/>
            <person name="Kelso J."/>
            <person name="Kitamura H."/>
            <person name="Kitano H."/>
            <person name="Kollias G."/>
            <person name="Krishnan S.P."/>
            <person name="Kruger A."/>
            <person name="Kummerfeld S.K."/>
            <person name="Kurochkin I.V."/>
            <person name="Lareau L.F."/>
            <person name="Lazarevic D."/>
            <person name="Lipovich L."/>
            <person name="Liu J."/>
            <person name="Liuni S."/>
            <person name="McWilliam S."/>
            <person name="Madan Babu M."/>
            <person name="Madera M."/>
            <person name="Marchionni L."/>
            <person name="Matsuda H."/>
            <person name="Matsuzawa S."/>
            <person name="Miki H."/>
            <person name="Mignone F."/>
            <person name="Miyake S."/>
            <person name="Morris K."/>
            <person name="Mottagui-Tabar S."/>
            <person name="Mulder N."/>
            <person name="Nakano N."/>
            <person name="Nakauchi H."/>
            <person name="Ng P."/>
            <person name="Nilsson R."/>
            <person name="Nishiguchi S."/>
            <person name="Nishikawa S."/>
            <person name="Nori F."/>
            <person name="Ohara O."/>
            <person name="Okazaki Y."/>
            <person name="Orlando V."/>
            <person name="Pang K.C."/>
            <person name="Pavan W.J."/>
            <person name="Pavesi G."/>
            <person name="Pesole G."/>
            <person name="Petrovsky N."/>
            <person name="Piazza S."/>
            <person name="Reed J."/>
            <person name="Reid J.F."/>
            <person name="Ring B.Z."/>
            <person name="Ringwald M."/>
            <person name="Rost B."/>
            <person name="Ruan Y."/>
            <person name="Salzberg S.L."/>
            <person name="Sandelin A."/>
            <person name="Schneider C."/>
            <person name="Schoenbach C."/>
            <person name="Sekiguchi K."/>
            <person name="Semple C.A."/>
            <person name="Seno S."/>
            <person name="Sessa L."/>
            <person name="Sheng Y."/>
            <person name="Shibata Y."/>
            <person name="Shimada H."/>
            <person name="Shimada K."/>
            <person name="Silva D."/>
            <person name="Sinclair B."/>
            <person name="Sperling S."/>
            <person name="Stupka E."/>
            <person name="Sugiura K."/>
            <person name="Sultana R."/>
            <person name="Takenaka Y."/>
            <person name="Taki K."/>
            <person name="Tammoja K."/>
            <person name="Tan S.L."/>
            <person name="Tang S."/>
            <person name="Taylor M.S."/>
            <person name="Tegner J."/>
            <person name="Teichmann S.A."/>
            <person name="Ueda H.R."/>
            <person name="van Nimwegen E."/>
            <person name="Verardo R."/>
            <person name="Wei C.L."/>
            <person name="Yagi K."/>
            <person name="Yamanishi H."/>
            <person name="Zabarovsky E."/>
            <person name="Zhu S."/>
            <person name="Zimmer A."/>
            <person name="Hide W."/>
            <person name="Bult C."/>
            <person name="Grimmond S.M."/>
            <person name="Teasdale R.D."/>
            <person name="Liu E.T."/>
            <person name="Brusic V."/>
            <person name="Quackenbush J."/>
            <person name="Wahlestedt C."/>
            <person name="Mattick J.S."/>
            <person name="Hume D.A."/>
            <person name="Kai C."/>
            <person name="Sasaki D."/>
            <person name="Tomaru Y."/>
            <person name="Fukuda S."/>
            <person name="Kanamori-Katayama M."/>
            <person name="Suzuki M."/>
            <person name="Aoki J."/>
            <person name="Arakawa T."/>
            <person name="Iida J."/>
            <person name="Imamura K."/>
            <person name="Itoh M."/>
            <person name="Kato T."/>
            <person name="Kawaji H."/>
            <person name="Kawagashira N."/>
            <person name="Kawashima T."/>
            <person name="Kojima M."/>
            <person name="Kondo S."/>
            <person name="Konno H."/>
            <person name="Nakano K."/>
            <person name="Ninomiya N."/>
            <person name="Nishio T."/>
            <person name="Okada M."/>
            <person name="Plessy C."/>
            <person name="Shibata K."/>
            <person name="Shiraki T."/>
            <person name="Suzuki S."/>
            <person name="Tagami M."/>
            <person name="Waki K."/>
            <person name="Watahiki A."/>
            <person name="Okamura-Oho Y."/>
            <person name="Suzuki H."/>
            <person name="Kawai J."/>
            <person name="Hayashizaki Y."/>
        </authorList>
    </citation>
    <scope>NUCLEOTIDE SEQUENCE [LARGE SCALE MRNA]</scope>
    <source>
        <strain>C57BL/6J</strain>
    </source>
</reference>
<reference key="2">
    <citation type="journal article" date="2009" name="PLoS Biol.">
        <title>Lineage-specific biology revealed by a finished genome assembly of the mouse.</title>
        <authorList>
            <person name="Church D.M."/>
            <person name="Goodstadt L."/>
            <person name="Hillier L.W."/>
            <person name="Zody M.C."/>
            <person name="Goldstein S."/>
            <person name="She X."/>
            <person name="Bult C.J."/>
            <person name="Agarwala R."/>
            <person name="Cherry J.L."/>
            <person name="DiCuccio M."/>
            <person name="Hlavina W."/>
            <person name="Kapustin Y."/>
            <person name="Meric P."/>
            <person name="Maglott D."/>
            <person name="Birtle Z."/>
            <person name="Marques A.C."/>
            <person name="Graves T."/>
            <person name="Zhou S."/>
            <person name="Teague B."/>
            <person name="Potamousis K."/>
            <person name="Churas C."/>
            <person name="Place M."/>
            <person name="Herschleb J."/>
            <person name="Runnheim R."/>
            <person name="Forrest D."/>
            <person name="Amos-Landgraf J."/>
            <person name="Schwartz D.C."/>
            <person name="Cheng Z."/>
            <person name="Lindblad-Toh K."/>
            <person name="Eichler E.E."/>
            <person name="Ponting C.P."/>
        </authorList>
    </citation>
    <scope>NUCLEOTIDE SEQUENCE [LARGE SCALE GENOMIC DNA]</scope>
    <source>
        <strain>C57BL/6J</strain>
    </source>
</reference>
<reference key="3">
    <citation type="journal article" date="2000" name="J. Biol. Chem.">
        <title>Identification and characterization of a novel protein from Sertoli cells, PASS1, that associates with mammalian small stress protein hsp27.</title>
        <authorList>
            <person name="Liu C."/>
            <person name="Gilmont R.R."/>
            <person name="Benndorf R."/>
            <person name="Welsh M.J."/>
        </authorList>
    </citation>
    <scope>INTERACTION WITH CRYAB AND HSPB1</scope>
</reference>
<reference key="4">
    <citation type="journal article" date="2010" name="Cell">
        <title>A tissue-specific atlas of mouse protein phosphorylation and expression.</title>
        <authorList>
            <person name="Huttlin E.L."/>
            <person name="Jedrychowski M.P."/>
            <person name="Elias J.E."/>
            <person name="Goswami T."/>
            <person name="Rad R."/>
            <person name="Beausoleil S.A."/>
            <person name="Villen J."/>
            <person name="Haas W."/>
            <person name="Sowa M.E."/>
            <person name="Gygi S.P."/>
        </authorList>
    </citation>
    <scope>IDENTIFICATION BY MASS SPECTROMETRY [LARGE SCALE ANALYSIS]</scope>
    <source>
        <tissue>Testis</tissue>
    </source>
</reference>
<comment type="function">
    <text evidence="1">May play a role in cellular stress response.</text>
</comment>
<comment type="subunit">
    <text evidence="4">Interacts with CRYAB and HSPB1.</text>
</comment>
<comment type="subcellular location">
    <subcellularLocation>
        <location evidence="1">Cytoplasm</location>
    </subcellularLocation>
</comment>
<feature type="chain" id="PRO_0000284114" description="HSPB1-associated protein 1">
    <location>
        <begin position="1"/>
        <end position="483"/>
    </location>
</feature>
<feature type="domain" description="JmjC" evidence="2">
    <location>
        <begin position="124"/>
        <end position="288"/>
    </location>
</feature>
<feature type="region of interest" description="Disordered" evidence="3">
    <location>
        <begin position="1"/>
        <end position="26"/>
    </location>
</feature>
<feature type="region of interest" description="Interaction with HSPB1" evidence="1">
    <location>
        <begin position="88"/>
        <end position="208"/>
    </location>
</feature>
<feature type="region of interest" description="Disordered" evidence="3">
    <location>
        <begin position="388"/>
        <end position="416"/>
    </location>
</feature>
<feature type="sequence conflict" description="In Ref. 1; BAC36242." evidence="5" ref="1">
    <original>S</original>
    <variation>G</variation>
    <location>
        <position position="268"/>
    </location>
</feature>
<dbReference type="EMBL" id="AK076189">
    <property type="protein sequence ID" value="BAC36242.1"/>
    <property type="molecule type" value="mRNA"/>
</dbReference>
<dbReference type="EMBL" id="AC129574">
    <property type="status" value="NOT_ANNOTATED_CDS"/>
    <property type="molecule type" value="Genomic_DNA"/>
</dbReference>
<dbReference type="CCDS" id="CCDS28142.1"/>
<dbReference type="RefSeq" id="NP_780320.2">
    <property type="nucleotide sequence ID" value="NM_175111.3"/>
</dbReference>
<dbReference type="SMR" id="Q8BK58"/>
<dbReference type="BioGRID" id="211634">
    <property type="interactions" value="1"/>
</dbReference>
<dbReference type="FunCoup" id="Q8BK58">
    <property type="interactions" value="201"/>
</dbReference>
<dbReference type="STRING" id="10090.ENSMUSP00000156217"/>
<dbReference type="GlyGen" id="Q8BK58">
    <property type="glycosylation" value="2 sites, 1 O-linked glycan (1 site)"/>
</dbReference>
<dbReference type="PhosphoSitePlus" id="Q8BK58"/>
<dbReference type="SwissPalm" id="Q8BK58"/>
<dbReference type="PaxDb" id="10090-ENSMUSP00000023555"/>
<dbReference type="PeptideAtlas" id="Q8BK58"/>
<dbReference type="ProteomicsDB" id="269718"/>
<dbReference type="Pumba" id="Q8BK58"/>
<dbReference type="Antibodypedia" id="16790">
    <property type="antibodies" value="230 antibodies from 31 providers"/>
</dbReference>
<dbReference type="DNASU" id="66667"/>
<dbReference type="Ensembl" id="ENSMUST00000231579.2">
    <property type="protein sequence ID" value="ENSMUSP00000156217.2"/>
    <property type="gene ID" value="ENSMUSG00000022849.6"/>
</dbReference>
<dbReference type="GeneID" id="66667"/>
<dbReference type="KEGG" id="mmu:66667"/>
<dbReference type="UCSC" id="uc007zbq.1">
    <property type="organism name" value="mouse"/>
</dbReference>
<dbReference type="AGR" id="MGI:1913917"/>
<dbReference type="CTD" id="79663"/>
<dbReference type="MGI" id="MGI:1913917">
    <property type="gene designation" value="Hspbap1"/>
</dbReference>
<dbReference type="VEuPathDB" id="HostDB:ENSMUSG00000022849"/>
<dbReference type="eggNOG" id="KOG2132">
    <property type="taxonomic scope" value="Eukaryota"/>
</dbReference>
<dbReference type="GeneTree" id="ENSGT00940000159893"/>
<dbReference type="HOGENOM" id="CLU_016785_5_1_1"/>
<dbReference type="InParanoid" id="Q8BK58"/>
<dbReference type="OMA" id="QRMMSKS"/>
<dbReference type="OrthoDB" id="47172at2759"/>
<dbReference type="PhylomeDB" id="Q8BK58"/>
<dbReference type="TreeFam" id="TF315056"/>
<dbReference type="BioGRID-ORCS" id="66667">
    <property type="hits" value="2 hits in 78 CRISPR screens"/>
</dbReference>
<dbReference type="ChiTaRS" id="Hspbap1">
    <property type="organism name" value="mouse"/>
</dbReference>
<dbReference type="PRO" id="PR:Q8BK58"/>
<dbReference type="Proteomes" id="UP000000589">
    <property type="component" value="Chromosome 16"/>
</dbReference>
<dbReference type="RNAct" id="Q8BK58">
    <property type="molecule type" value="protein"/>
</dbReference>
<dbReference type="Bgee" id="ENSMUSG00000022849">
    <property type="expression patterns" value="Expressed in ectoplacental cone and 130 other cell types or tissues"/>
</dbReference>
<dbReference type="ExpressionAtlas" id="Q8BK58">
    <property type="expression patterns" value="baseline and differential"/>
</dbReference>
<dbReference type="GO" id="GO:0005737">
    <property type="term" value="C:cytoplasm"/>
    <property type="evidence" value="ECO:0007669"/>
    <property type="project" value="UniProtKB-SubCell"/>
</dbReference>
<dbReference type="FunFam" id="2.60.120.650:FF:000018">
    <property type="entry name" value="HSPB1-associated protein 1 homolog"/>
    <property type="match status" value="1"/>
</dbReference>
<dbReference type="FunFam" id="2.60.120.10:FF:000343">
    <property type="entry name" value="HSPB1-associated protein 1 isoform X3"/>
    <property type="match status" value="1"/>
</dbReference>
<dbReference type="Gene3D" id="2.60.120.650">
    <property type="entry name" value="Cupin"/>
    <property type="match status" value="1"/>
</dbReference>
<dbReference type="InterPro" id="IPR041667">
    <property type="entry name" value="Cupin_8"/>
</dbReference>
<dbReference type="InterPro" id="IPR013296">
    <property type="entry name" value="HSPB1-associated_protein_1"/>
</dbReference>
<dbReference type="InterPro" id="IPR003347">
    <property type="entry name" value="JmjC_dom"/>
</dbReference>
<dbReference type="PANTHER" id="PTHR12461:SF43">
    <property type="entry name" value="HSPB1-ASSOCIATED PROTEIN 1"/>
    <property type="match status" value="1"/>
</dbReference>
<dbReference type="PANTHER" id="PTHR12461">
    <property type="entry name" value="HYPOXIA-INDUCIBLE FACTOR 1 ALPHA INHIBITOR-RELATED"/>
    <property type="match status" value="1"/>
</dbReference>
<dbReference type="Pfam" id="PF13621">
    <property type="entry name" value="Cupin_8"/>
    <property type="match status" value="1"/>
</dbReference>
<dbReference type="PRINTS" id="PR01886">
    <property type="entry name" value="PASS1"/>
</dbReference>
<dbReference type="SMART" id="SM00558">
    <property type="entry name" value="JmjC"/>
    <property type="match status" value="1"/>
</dbReference>
<dbReference type="SUPFAM" id="SSF51197">
    <property type="entry name" value="Clavaminate synthase-like"/>
    <property type="match status" value="1"/>
</dbReference>
<dbReference type="PROSITE" id="PS51184">
    <property type="entry name" value="JMJC"/>
    <property type="match status" value="1"/>
</dbReference>